<sequence length="975" mass="109016">MKKMLFMNKKEKKEEQSPAHSSLAQQHQLAQQQYQLQQQQLQLQYQQHQQQLQLAQQQKQNEQNLAQLSTSTSSNSSVNNTTNTNTNTTNSSSISSNNNNNNNTAVPILKAHDFCGTIMILGHTESGKTTLQRQLEFIYGVTDPTDAKHYQRLIYGNTLATLIRFIENSERLNITLSPDNLARVKRIQSQPVELARNRLPRFPLKLGWDCKCIWEDKVIQSVYNHSKICSEIRTPGRPKYYMDRMFKVFDPSYTPTEMDIISAYDQKDTIQSSAIIHKRFKVDLFGCSGKQSSPKNWVGLHQNYKPNYIFYVVALKDYFSDHLVATQNTDPTIVEMCNNHIHRNLLLESLNSFETLTKSELFDKSLAIYLIFNTSDIFYENIKQYDLKSCFSEYEGGNDPEKAVSFISNKFTKFLQNKDKPYKSHIVNLLDKNNVREEFEGIFDSLKIDAEKRGFTTPYNQSNSSPVSSIGSNSSRNSRLPNTSVSIPGLYSSDNDNTRLKNVNNNNNNNNNTTTYGSSTFPSSVISTTGSISNSIASAMDNDSSYSNESSPTSSMTLLPTTTTTTTTTTTTATTTDSTNNNNNNATVVIGKGKPPKEPKPVKPPKEPKPPKEPKPPKEPKPPKEPKPIKEPKEKPVKESKPPKEPKPIKEPKESKEPKEPKEPKPTKPPKEKKTSKVDGAAESKKNGADSCGNGGVGSKIKLESGFGSLQGRRKNMEDTHVILNNLMGAVTYNGPPKDIPISYYAVYDGHGGTETSTLLEPTVHNCLVNSQSFRDGDYEQAFRDAYAEADDIVIEKCEKSGSTGVSALLVGNKLYTANVGDSEIVLARAQPNANPKGPVTYEPVLLSYKHLASDDQEKKRVTDLGGMIIFNRLFGSLAVSRSFGDKEYKEGEKKFCVSDPYQTTTDLTARDHFFILACDGLWDKVEYDEAVQFVQRNIKLGKSATEISELLAQDSYDRGSGDNITVLVVILNWN</sequence>
<proteinExistence type="evidence at protein level"/>
<comment type="function">
    <text evidence="6 7">Involved in cell-type differentiation and morphogenesis. Dephosphorylates casein; in vitro. May also be involved as modulators or transducers in various transmembrane signaling systems.</text>
</comment>
<comment type="catalytic activity">
    <reaction>
        <text>O-phospho-L-seryl-[protein] + H2O = L-seryl-[protein] + phosphate</text>
        <dbReference type="Rhea" id="RHEA:20629"/>
        <dbReference type="Rhea" id="RHEA-COMP:9863"/>
        <dbReference type="Rhea" id="RHEA-COMP:11604"/>
        <dbReference type="ChEBI" id="CHEBI:15377"/>
        <dbReference type="ChEBI" id="CHEBI:29999"/>
        <dbReference type="ChEBI" id="CHEBI:43474"/>
        <dbReference type="ChEBI" id="CHEBI:83421"/>
        <dbReference type="EC" id="3.1.3.16"/>
    </reaction>
</comment>
<comment type="catalytic activity">
    <reaction>
        <text>O-phospho-L-threonyl-[protein] + H2O = L-threonyl-[protein] + phosphate</text>
        <dbReference type="Rhea" id="RHEA:47004"/>
        <dbReference type="Rhea" id="RHEA-COMP:11060"/>
        <dbReference type="Rhea" id="RHEA-COMP:11605"/>
        <dbReference type="ChEBI" id="CHEBI:15377"/>
        <dbReference type="ChEBI" id="CHEBI:30013"/>
        <dbReference type="ChEBI" id="CHEBI:43474"/>
        <dbReference type="ChEBI" id="CHEBI:61977"/>
        <dbReference type="EC" id="3.1.3.16"/>
    </reaction>
</comment>
<comment type="cofactor">
    <cofactor evidence="1">
        <name>Mg(2+)</name>
        <dbReference type="ChEBI" id="CHEBI:18420"/>
    </cofactor>
    <cofactor evidence="1">
        <name>Mn(2+)</name>
        <dbReference type="ChEBI" id="CHEBI:29035"/>
    </cofactor>
    <text evidence="1">Binds 2 magnesium or manganese ions per subunit.</text>
</comment>
<comment type="activity regulation">
    <text evidence="7">Inhibited by 50 mM NaF (sodium fluoride).</text>
</comment>
<comment type="subunit">
    <text>G proteins are composed of 3 units; alpha, beta and gamma. The alpha chain contains the guanine nucleotide binding site.</text>
</comment>
<comment type="subcellular location">
    <subcellularLocation>
        <location evidence="7">Cytoplasm</location>
        <location evidence="7">Cytosol</location>
    </subcellularLocation>
    <subcellularLocation>
        <location evidence="7">Cell membrane</location>
    </subcellularLocation>
</comment>
<comment type="developmental stage">
    <text>Moderately expressed during growth. Increases during development, peaking at around 8 hours of development (mound stage) and then decreases gradually during the later stages. Mainly expressed in the prestalk cell population during the later multicellular stages. Required for prestalk specific gene expression and for prespore cell differentiation. Expressed (at protein level).</text>
</comment>
<comment type="disruption phenotype">
    <text evidence="7">Morphological arrest at the mound stage and a defect in cell-type differentiation. Instead of going through morphogenesis, after 16 hours of development, the mounds disaggregate to form smaller aggregates that eventually produce abnormal looking finger-like structures.</text>
</comment>
<comment type="similarity">
    <text evidence="8">In the N-terminal section; belongs to the G-alpha family.</text>
</comment>
<comment type="similarity">
    <text evidence="8">In the C-terminal section; belongs to the PP2C family.</text>
</comment>
<protein>
    <recommendedName>
        <fullName>Protein spalten</fullName>
    </recommendedName>
    <domain>
        <recommendedName>
            <fullName>Probable guanine nucleotide-binding protein spalten</fullName>
        </recommendedName>
    </domain>
    <domain>
        <recommendedName>
            <fullName>Protein serine/threonine phosphatase spalten</fullName>
            <ecNumber>3.1.3.16</ecNumber>
        </recommendedName>
    </domain>
</protein>
<dbReference type="EC" id="3.1.3.16"/>
<dbReference type="EMBL" id="AF019985">
    <property type="protein sequence ID" value="AAB70844.1"/>
    <property type="molecule type" value="mRNA"/>
</dbReference>
<dbReference type="EMBL" id="AAFI02000014">
    <property type="protein sequence ID" value="EAL69377.1"/>
    <property type="molecule type" value="Genomic_DNA"/>
</dbReference>
<dbReference type="PIR" id="T08606">
    <property type="entry name" value="T08606"/>
</dbReference>
<dbReference type="RefSeq" id="XP_643266.1">
    <property type="nucleotide sequence ID" value="XM_638174.1"/>
</dbReference>
<dbReference type="SMR" id="O15743"/>
<dbReference type="FunCoup" id="O15743">
    <property type="interactions" value="663"/>
</dbReference>
<dbReference type="STRING" id="44689.O15743"/>
<dbReference type="PaxDb" id="44689-DDB0185064"/>
<dbReference type="EnsemblProtists" id="EAL69377">
    <property type="protein sequence ID" value="EAL69377"/>
    <property type="gene ID" value="DDB_G0276155"/>
</dbReference>
<dbReference type="GeneID" id="8620309"/>
<dbReference type="KEGG" id="ddi:DDB_G0276155"/>
<dbReference type="dictyBase" id="DDB_G0276155">
    <property type="gene designation" value="spnA"/>
</dbReference>
<dbReference type="VEuPathDB" id="AmoebaDB:DDB_G0276155"/>
<dbReference type="eggNOG" id="KOG0082">
    <property type="taxonomic scope" value="Eukaryota"/>
</dbReference>
<dbReference type="eggNOG" id="KOG0698">
    <property type="taxonomic scope" value="Eukaryota"/>
</dbReference>
<dbReference type="HOGENOM" id="CLU_304722_0_0_1"/>
<dbReference type="InParanoid" id="O15743"/>
<dbReference type="OMA" id="ISYYAVY"/>
<dbReference type="PRO" id="PR:O15743"/>
<dbReference type="Proteomes" id="UP000002195">
    <property type="component" value="Chromosome 2"/>
</dbReference>
<dbReference type="GO" id="GO:0005829">
    <property type="term" value="C:cytosol"/>
    <property type="evidence" value="ECO:0007669"/>
    <property type="project" value="UniProtKB-SubCell"/>
</dbReference>
<dbReference type="GO" id="GO:0016020">
    <property type="term" value="C:membrane"/>
    <property type="evidence" value="ECO:0000314"/>
    <property type="project" value="dictyBase"/>
</dbReference>
<dbReference type="GO" id="GO:0005886">
    <property type="term" value="C:plasma membrane"/>
    <property type="evidence" value="ECO:0007669"/>
    <property type="project" value="UniProtKB-SubCell"/>
</dbReference>
<dbReference type="GO" id="GO:0001726">
    <property type="term" value="C:ruffle"/>
    <property type="evidence" value="ECO:0000314"/>
    <property type="project" value="dictyBase"/>
</dbReference>
<dbReference type="GO" id="GO:0031683">
    <property type="term" value="F:G-protein beta/gamma-subunit complex binding"/>
    <property type="evidence" value="ECO:0007669"/>
    <property type="project" value="InterPro"/>
</dbReference>
<dbReference type="GO" id="GO:0005525">
    <property type="term" value="F:GTP binding"/>
    <property type="evidence" value="ECO:0000315"/>
    <property type="project" value="dictyBase"/>
</dbReference>
<dbReference type="GO" id="GO:0003924">
    <property type="term" value="F:GTPase activity"/>
    <property type="evidence" value="ECO:0007669"/>
    <property type="project" value="InterPro"/>
</dbReference>
<dbReference type="GO" id="GO:0000287">
    <property type="term" value="F:magnesium ion binding"/>
    <property type="evidence" value="ECO:0000314"/>
    <property type="project" value="dictyBase"/>
</dbReference>
<dbReference type="GO" id="GO:0004722">
    <property type="term" value="F:protein serine/threonine phosphatase activity"/>
    <property type="evidence" value="ECO:0000314"/>
    <property type="project" value="dictyBase"/>
</dbReference>
<dbReference type="GO" id="GO:0009653">
    <property type="term" value="P:anatomical structure morphogenesis"/>
    <property type="evidence" value="ECO:0000315"/>
    <property type="project" value="dictyBase"/>
</dbReference>
<dbReference type="GO" id="GO:0030154">
    <property type="term" value="P:cell differentiation"/>
    <property type="evidence" value="ECO:0000315"/>
    <property type="project" value="dictyBase"/>
</dbReference>
<dbReference type="GO" id="GO:0007186">
    <property type="term" value="P:G protein-coupled receptor signaling pathway"/>
    <property type="evidence" value="ECO:0007669"/>
    <property type="project" value="InterPro"/>
</dbReference>
<dbReference type="GO" id="GO:0007165">
    <property type="term" value="P:signal transduction"/>
    <property type="evidence" value="ECO:0000318"/>
    <property type="project" value="GO_Central"/>
</dbReference>
<dbReference type="CDD" id="cd00143">
    <property type="entry name" value="PP2Cc"/>
    <property type="match status" value="1"/>
</dbReference>
<dbReference type="FunFam" id="3.40.50.300:FF:000692">
    <property type="entry name" value="Guanine nucleotide-binding protein subunit alpha"/>
    <property type="match status" value="1"/>
</dbReference>
<dbReference type="Gene3D" id="1.10.400.10">
    <property type="entry name" value="GI Alpha 1, domain 2-like"/>
    <property type="match status" value="1"/>
</dbReference>
<dbReference type="Gene3D" id="3.40.50.300">
    <property type="entry name" value="P-loop containing nucleotide triphosphate hydrolases"/>
    <property type="match status" value="1"/>
</dbReference>
<dbReference type="Gene3D" id="3.60.40.10">
    <property type="entry name" value="PPM-type phosphatase domain"/>
    <property type="match status" value="1"/>
</dbReference>
<dbReference type="InterPro" id="IPR001019">
    <property type="entry name" value="Gprotein_alpha_su"/>
</dbReference>
<dbReference type="InterPro" id="IPR011025">
    <property type="entry name" value="GproteinA_insert"/>
</dbReference>
<dbReference type="InterPro" id="IPR027417">
    <property type="entry name" value="P-loop_NTPase"/>
</dbReference>
<dbReference type="InterPro" id="IPR015655">
    <property type="entry name" value="PP2C"/>
</dbReference>
<dbReference type="InterPro" id="IPR000222">
    <property type="entry name" value="PP2C_BS"/>
</dbReference>
<dbReference type="InterPro" id="IPR036457">
    <property type="entry name" value="PPM-type-like_dom_sf"/>
</dbReference>
<dbReference type="InterPro" id="IPR001932">
    <property type="entry name" value="PPM-type_phosphatase-like_dom"/>
</dbReference>
<dbReference type="PANTHER" id="PTHR47992">
    <property type="entry name" value="PROTEIN PHOSPHATASE"/>
    <property type="match status" value="1"/>
</dbReference>
<dbReference type="Pfam" id="PF00503">
    <property type="entry name" value="G-alpha"/>
    <property type="match status" value="1"/>
</dbReference>
<dbReference type="Pfam" id="PF00481">
    <property type="entry name" value="PP2C"/>
    <property type="match status" value="1"/>
</dbReference>
<dbReference type="SMART" id="SM00275">
    <property type="entry name" value="G_alpha"/>
    <property type="match status" value="1"/>
</dbReference>
<dbReference type="SMART" id="SM00332">
    <property type="entry name" value="PP2Cc"/>
    <property type="match status" value="1"/>
</dbReference>
<dbReference type="SUPFAM" id="SSF52540">
    <property type="entry name" value="P-loop containing nucleoside triphosphate hydrolases"/>
    <property type="match status" value="1"/>
</dbReference>
<dbReference type="SUPFAM" id="SSF81606">
    <property type="entry name" value="PP2C-like"/>
    <property type="match status" value="1"/>
</dbReference>
<dbReference type="SUPFAM" id="SSF47895">
    <property type="entry name" value="Transducin (alpha subunit), insertion domain"/>
    <property type="match status" value="1"/>
</dbReference>
<dbReference type="PROSITE" id="PS51882">
    <property type="entry name" value="G_ALPHA"/>
    <property type="match status" value="1"/>
</dbReference>
<dbReference type="PROSITE" id="PS01032">
    <property type="entry name" value="PPM_1"/>
    <property type="match status" value="1"/>
</dbReference>
<dbReference type="PROSITE" id="PS51746">
    <property type="entry name" value="PPM_2"/>
    <property type="match status" value="1"/>
</dbReference>
<name>SPNA_DICDI</name>
<keyword id="KW-1003">Cell membrane</keyword>
<keyword id="KW-0175">Coiled coil</keyword>
<keyword id="KW-0963">Cytoplasm</keyword>
<keyword id="KW-0342">GTP-binding</keyword>
<keyword id="KW-0378">Hydrolase</keyword>
<keyword id="KW-0460">Magnesium</keyword>
<keyword id="KW-0464">Manganese</keyword>
<keyword id="KW-0472">Membrane</keyword>
<keyword id="KW-0479">Metal-binding</keyword>
<keyword id="KW-0547">Nucleotide-binding</keyword>
<keyword id="KW-0904">Protein phosphatase</keyword>
<keyword id="KW-1185">Reference proteome</keyword>
<keyword id="KW-0807">Transducer</keyword>
<evidence type="ECO:0000250" key="1"/>
<evidence type="ECO:0000255" key="2"/>
<evidence type="ECO:0000255" key="3">
    <source>
        <dbReference type="PROSITE-ProRule" id="PRU01082"/>
    </source>
</evidence>
<evidence type="ECO:0000255" key="4">
    <source>
        <dbReference type="PROSITE-ProRule" id="PRU01230"/>
    </source>
</evidence>
<evidence type="ECO:0000256" key="5">
    <source>
        <dbReference type="SAM" id="MobiDB-lite"/>
    </source>
</evidence>
<evidence type="ECO:0000269" key="6">
    <source>
    </source>
</evidence>
<evidence type="ECO:0000269" key="7">
    <source>
    </source>
</evidence>
<evidence type="ECO:0000305" key="8"/>
<organism>
    <name type="scientific">Dictyostelium discoideum</name>
    <name type="common">Social amoeba</name>
    <dbReference type="NCBI Taxonomy" id="44689"/>
    <lineage>
        <taxon>Eukaryota</taxon>
        <taxon>Amoebozoa</taxon>
        <taxon>Evosea</taxon>
        <taxon>Eumycetozoa</taxon>
        <taxon>Dictyostelia</taxon>
        <taxon>Dictyosteliales</taxon>
        <taxon>Dictyosteliaceae</taxon>
        <taxon>Dictyostelium</taxon>
    </lineage>
</organism>
<accession>O15743</accession>
<accession>Q552E7</accession>
<reference key="1">
    <citation type="journal article" date="1998" name="Genes Dev.">
        <title>Spalten, a protein containing Galpha-protein-like and PP2C domains, is essential for cell-type differentiation in Dictyostelium.</title>
        <authorList>
            <person name="Aubry L."/>
            <person name="Firtel R.A."/>
        </authorList>
    </citation>
    <scope>NUCLEOTIDE SEQUENCE [MRNA]</scope>
    <scope>DISRUPTION PHENOTYPE</scope>
    <scope>FUNCTION</scope>
    <scope>ACTIVITY REGULATION</scope>
    <scope>MUTAGENESIS OF ASN-373; ASP-376; ASP-920 AND ASP-924</scope>
    <scope>SUBCELLULAR LOCATION</scope>
    <source>
        <strain>AX3</strain>
    </source>
</reference>
<reference key="2">
    <citation type="journal article" date="2002" name="Nature">
        <title>Sequence and analysis of chromosome 2 of Dictyostelium discoideum.</title>
        <authorList>
            <person name="Gloeckner G."/>
            <person name="Eichinger L."/>
            <person name="Szafranski K."/>
            <person name="Pachebat J.A."/>
            <person name="Bankier A.T."/>
            <person name="Dear P.H."/>
            <person name="Lehmann R."/>
            <person name="Baumgart C."/>
            <person name="Parra G."/>
            <person name="Abril J.F."/>
            <person name="Guigo R."/>
            <person name="Kumpf K."/>
            <person name="Tunggal B."/>
            <person name="Cox E.C."/>
            <person name="Quail M.A."/>
            <person name="Platzer M."/>
            <person name="Rosenthal A."/>
            <person name="Noegel A.A."/>
        </authorList>
    </citation>
    <scope>NUCLEOTIDE SEQUENCE [LARGE SCALE GENOMIC DNA]</scope>
    <source>
        <strain>AX4</strain>
    </source>
</reference>
<reference key="3">
    <citation type="journal article" date="2005" name="Nature">
        <title>The genome of the social amoeba Dictyostelium discoideum.</title>
        <authorList>
            <person name="Eichinger L."/>
            <person name="Pachebat J.A."/>
            <person name="Gloeckner G."/>
            <person name="Rajandream M.A."/>
            <person name="Sucgang R."/>
            <person name="Berriman M."/>
            <person name="Song J."/>
            <person name="Olsen R."/>
            <person name="Szafranski K."/>
            <person name="Xu Q."/>
            <person name="Tunggal B."/>
            <person name="Kummerfeld S."/>
            <person name="Madera M."/>
            <person name="Konfortov B.A."/>
            <person name="Rivero F."/>
            <person name="Bankier A.T."/>
            <person name="Lehmann R."/>
            <person name="Hamlin N."/>
            <person name="Davies R."/>
            <person name="Gaudet P."/>
            <person name="Fey P."/>
            <person name="Pilcher K."/>
            <person name="Chen G."/>
            <person name="Saunders D."/>
            <person name="Sodergren E.J."/>
            <person name="Davis P."/>
            <person name="Kerhornou A."/>
            <person name="Nie X."/>
            <person name="Hall N."/>
            <person name="Anjard C."/>
            <person name="Hemphill L."/>
            <person name="Bason N."/>
            <person name="Farbrother P."/>
            <person name="Desany B."/>
            <person name="Just E."/>
            <person name="Morio T."/>
            <person name="Rost R."/>
            <person name="Churcher C.M."/>
            <person name="Cooper J."/>
            <person name="Haydock S."/>
            <person name="van Driessche N."/>
            <person name="Cronin A."/>
            <person name="Goodhead I."/>
            <person name="Muzny D.M."/>
            <person name="Mourier T."/>
            <person name="Pain A."/>
            <person name="Lu M."/>
            <person name="Harper D."/>
            <person name="Lindsay R."/>
            <person name="Hauser H."/>
            <person name="James K.D."/>
            <person name="Quiles M."/>
            <person name="Madan Babu M."/>
            <person name="Saito T."/>
            <person name="Buchrieser C."/>
            <person name="Wardroper A."/>
            <person name="Felder M."/>
            <person name="Thangavelu M."/>
            <person name="Johnson D."/>
            <person name="Knights A."/>
            <person name="Loulseged H."/>
            <person name="Mungall K.L."/>
            <person name="Oliver K."/>
            <person name="Price C."/>
            <person name="Quail M.A."/>
            <person name="Urushihara H."/>
            <person name="Hernandez J."/>
            <person name="Rabbinowitsch E."/>
            <person name="Steffen D."/>
            <person name="Sanders M."/>
            <person name="Ma J."/>
            <person name="Kohara Y."/>
            <person name="Sharp S."/>
            <person name="Simmonds M.N."/>
            <person name="Spiegler S."/>
            <person name="Tivey A."/>
            <person name="Sugano S."/>
            <person name="White B."/>
            <person name="Walker D."/>
            <person name="Woodward J.R."/>
            <person name="Winckler T."/>
            <person name="Tanaka Y."/>
            <person name="Shaulsky G."/>
            <person name="Schleicher M."/>
            <person name="Weinstock G.M."/>
            <person name="Rosenthal A."/>
            <person name="Cox E.C."/>
            <person name="Chisholm R.L."/>
            <person name="Gibbs R.A."/>
            <person name="Loomis W.F."/>
            <person name="Platzer M."/>
            <person name="Kay R.R."/>
            <person name="Williams J.G."/>
            <person name="Dear P.H."/>
            <person name="Noegel A.A."/>
            <person name="Barrell B.G."/>
            <person name="Kuspa A."/>
        </authorList>
    </citation>
    <scope>NUCLEOTIDE SEQUENCE [LARGE SCALE GENOMIC DNA]</scope>
    <source>
        <strain>AX4</strain>
    </source>
</reference>
<reference key="4">
    <citation type="journal article" date="2003" name="Dev. Biol.">
        <title>The novel ankyrin-repeat containing kinase ARCK-1 acts as a suppressor of the Spalten signaling pathway during Dictyostelium development.</title>
        <authorList>
            <person name="Aubry L."/>
            <person name="Lee S."/>
            <person name="Ravanel K."/>
            <person name="Firtel R.A."/>
        </authorList>
    </citation>
    <scope>FUNCTION</scope>
</reference>
<feature type="chain" id="PRO_0000367575" description="Protein spalten">
    <location>
        <begin position="1"/>
        <end position="975"/>
    </location>
</feature>
<feature type="domain" description="G-alpha" evidence="4">
    <location>
        <begin position="114"/>
        <end position="458"/>
    </location>
</feature>
<feature type="domain" description="PPM-type phosphatase" evidence="3">
    <location>
        <begin position="704"/>
        <end position="972"/>
    </location>
</feature>
<feature type="region of interest" description="Disordered" evidence="5">
    <location>
        <begin position="1"/>
        <end position="31"/>
    </location>
</feature>
<feature type="region of interest" description="Disordered" evidence="5">
    <location>
        <begin position="64"/>
        <end position="99"/>
    </location>
</feature>
<feature type="region of interest" description="G1 motif" evidence="4">
    <location>
        <begin position="117"/>
        <end position="130"/>
    </location>
</feature>
<feature type="region of interest" description="G2 motif" evidence="4">
    <location>
        <begin position="259"/>
        <end position="267"/>
    </location>
</feature>
<feature type="region of interest" description="G3 motif" evidence="4">
    <location>
        <begin position="282"/>
        <end position="291"/>
    </location>
</feature>
<feature type="region of interest" description="G4 motif" evidence="4">
    <location>
        <begin position="369"/>
        <end position="376"/>
    </location>
</feature>
<feature type="region of interest" description="G5 motif" evidence="4">
    <location>
        <begin position="427"/>
        <end position="432"/>
    </location>
</feature>
<feature type="region of interest" description="Disordered" evidence="5">
    <location>
        <begin position="455"/>
        <end position="520"/>
    </location>
</feature>
<feature type="region of interest" description="Disordered" evidence="5">
    <location>
        <begin position="541"/>
        <end position="700"/>
    </location>
</feature>
<feature type="coiled-coil region" evidence="2">
    <location>
        <begin position="21"/>
        <end position="70"/>
    </location>
</feature>
<feature type="compositionally biased region" description="Basic and acidic residues" evidence="5">
    <location>
        <begin position="8"/>
        <end position="17"/>
    </location>
</feature>
<feature type="compositionally biased region" description="Low complexity" evidence="5">
    <location>
        <begin position="460"/>
        <end position="478"/>
    </location>
</feature>
<feature type="compositionally biased region" description="Low complexity" evidence="5">
    <location>
        <begin position="500"/>
        <end position="515"/>
    </location>
</feature>
<feature type="compositionally biased region" description="Low complexity" evidence="5">
    <location>
        <begin position="544"/>
        <end position="587"/>
    </location>
</feature>
<feature type="compositionally biased region" description="Basic and acidic residues" evidence="5">
    <location>
        <begin position="595"/>
        <end position="688"/>
    </location>
</feature>
<feature type="binding site" evidence="1">
    <location>
        <begin position="122"/>
        <end position="129"/>
    </location>
    <ligand>
        <name>GTP</name>
        <dbReference type="ChEBI" id="CHEBI:37565"/>
    </ligand>
</feature>
<feature type="binding site" evidence="1">
    <location>
        <begin position="261"/>
        <end position="267"/>
    </location>
    <ligand>
        <name>GTP</name>
        <dbReference type="ChEBI" id="CHEBI:37565"/>
    </ligand>
</feature>
<feature type="binding site" evidence="1">
    <location>
        <begin position="286"/>
        <end position="290"/>
    </location>
    <ligand>
        <name>GTP</name>
        <dbReference type="ChEBI" id="CHEBI:37565"/>
    </ligand>
</feature>
<feature type="binding site" evidence="1">
    <location>
        <begin position="373"/>
        <end position="376"/>
    </location>
    <ligand>
        <name>GTP</name>
        <dbReference type="ChEBI" id="CHEBI:37565"/>
    </ligand>
</feature>
<feature type="binding site" evidence="1">
    <location>
        <position position="749"/>
    </location>
    <ligand>
        <name>Mn(2+)</name>
        <dbReference type="ChEBI" id="CHEBI:29035"/>
        <label>1</label>
    </ligand>
</feature>
<feature type="binding site" evidence="1">
    <location>
        <position position="750"/>
    </location>
    <ligand>
        <name>Mn(2+)</name>
        <dbReference type="ChEBI" id="CHEBI:29035"/>
        <label>1</label>
    </ligand>
</feature>
<feature type="binding site" evidence="1">
    <location>
        <position position="920"/>
    </location>
    <ligand>
        <name>Mn(2+)</name>
        <dbReference type="ChEBI" id="CHEBI:29035"/>
        <label>2</label>
    </ligand>
</feature>
<feature type="binding site" evidence="1">
    <location>
        <position position="963"/>
    </location>
    <ligand>
        <name>Mn(2+)</name>
        <dbReference type="ChEBI" id="CHEBI:29035"/>
        <label>2</label>
    </ligand>
</feature>
<feature type="mutagenesis site" description="Leads to the formation of very small-sized fruiting bodies." evidence="7">
    <original>N</original>
    <variation>D</variation>
    <location>
        <position position="373"/>
    </location>
</feature>
<feature type="mutagenesis site" description="Leads to the formation of abnormal looking fruiting bodies." evidence="7">
    <original>D</original>
    <variation>A</variation>
    <location>
        <position position="376"/>
    </location>
</feature>
<feature type="mutagenesis site" description="Loss of phosphatase activity; when associated with A-924." evidence="7">
    <original>D</original>
    <variation>A</variation>
    <location>
        <position position="920"/>
    </location>
</feature>
<feature type="mutagenesis site" description="Loss of phosphatase activity; when associated with A-920." evidence="7">
    <original>D</original>
    <variation>A</variation>
    <location>
        <position position="924"/>
    </location>
</feature>
<gene>
    <name type="primary">spnA</name>
    <name type="synonym">spn</name>
    <name type="ORF">DDB_G0276155</name>
</gene>